<feature type="initiator methionine" description="Removed" evidence="24">
    <location>
        <position position="1"/>
    </location>
</feature>
<feature type="chain" id="PRO_0000226972" description="TGF-beta-activated kinase 1 and MAP3K7-binding protein 3">
    <location>
        <begin position="2"/>
        <end position="712"/>
    </location>
</feature>
<feature type="domain" description="CUE" evidence="3">
    <location>
        <begin position="8"/>
        <end position="51"/>
    </location>
</feature>
<feature type="zinc finger region" description="RanBP2-type" evidence="2">
    <location>
        <begin position="682"/>
        <end position="712"/>
    </location>
</feature>
<feature type="region of interest" description="Disordered" evidence="4">
    <location>
        <begin position="141"/>
        <end position="189"/>
    </location>
</feature>
<feature type="region of interest" description="Disordered" evidence="4">
    <location>
        <begin position="227"/>
        <end position="345"/>
    </location>
</feature>
<feature type="region of interest" description="Disordered" evidence="4">
    <location>
        <begin position="369"/>
        <end position="447"/>
    </location>
</feature>
<feature type="region of interest" description="Disordered" evidence="4">
    <location>
        <begin position="475"/>
        <end position="509"/>
    </location>
</feature>
<feature type="region of interest" description="Disordered" evidence="4">
    <location>
        <begin position="609"/>
        <end position="636"/>
    </location>
</feature>
<feature type="region of interest" description="Disordered" evidence="4">
    <location>
        <begin position="658"/>
        <end position="682"/>
    </location>
</feature>
<feature type="coiled-coil region" evidence="1">
    <location>
        <begin position="517"/>
        <end position="559"/>
    </location>
</feature>
<feature type="compositionally biased region" description="Polar residues" evidence="4">
    <location>
        <begin position="163"/>
        <end position="173"/>
    </location>
</feature>
<feature type="compositionally biased region" description="Low complexity" evidence="4">
    <location>
        <begin position="233"/>
        <end position="249"/>
    </location>
</feature>
<feature type="compositionally biased region" description="Low complexity" evidence="4">
    <location>
        <begin position="269"/>
        <end position="290"/>
    </location>
</feature>
<feature type="compositionally biased region" description="Pro residues" evidence="4">
    <location>
        <begin position="322"/>
        <end position="332"/>
    </location>
</feature>
<feature type="compositionally biased region" description="Polar residues" evidence="4">
    <location>
        <begin position="336"/>
        <end position="345"/>
    </location>
</feature>
<feature type="compositionally biased region" description="Polar residues" evidence="4">
    <location>
        <begin position="371"/>
        <end position="404"/>
    </location>
</feature>
<feature type="compositionally biased region" description="Low complexity" evidence="4">
    <location>
        <begin position="405"/>
        <end position="417"/>
    </location>
</feature>
<feature type="compositionally biased region" description="Basic and acidic residues" evidence="4">
    <location>
        <begin position="627"/>
        <end position="636"/>
    </location>
</feature>
<feature type="compositionally biased region" description="Basic and acidic residues" evidence="4">
    <location>
        <begin position="658"/>
        <end position="667"/>
    </location>
</feature>
<feature type="modified residue" description="N-acetylalanine" evidence="24">
    <location>
        <position position="2"/>
    </location>
</feature>
<feature type="modified residue" description="Phosphoserine" evidence="23 24">
    <location>
        <position position="60"/>
    </location>
</feature>
<feature type="modified residue" description="Phosphoserine" evidence="26">
    <location>
        <position position="101"/>
    </location>
</feature>
<feature type="modified residue" description="Phosphoserine" evidence="25">
    <location>
        <position position="103"/>
    </location>
</feature>
<feature type="modified residue" description="Phosphoserine" evidence="25">
    <location>
        <position position="385"/>
    </location>
</feature>
<feature type="modified residue" description="Phosphothreonine" evidence="23 25">
    <location>
        <position position="404"/>
    </location>
</feature>
<feature type="modified residue" description="Phosphoserine" evidence="25">
    <location>
        <position position="409"/>
    </location>
</feature>
<feature type="modified residue" description="Phosphoserine" evidence="23">
    <location>
        <position position="492"/>
    </location>
</feature>
<feature type="modified residue" description="Phosphoserine; by MAPKAPK2 and MAPKAPK3" evidence="10">
    <location>
        <position position="506"/>
    </location>
</feature>
<feature type="modified residue" description="(Microbial infection) S-methylcysteine" evidence="14">
    <location>
        <position position="692"/>
    </location>
</feature>
<feature type="cross-link" description="Glycyl lysine isopeptide (Lys-Gly) (interchain with G-Cter in ubiquitin)" evidence="19">
    <location>
        <position position="649"/>
    </location>
</feature>
<feature type="splice variant" id="VSP_017516" description="In isoform 2." evidence="21">
    <location>
        <begin position="602"/>
        <end position="629"/>
    </location>
</feature>
<feature type="sequence variant" id="VAR_055294" description="In dbSNP:rs5927629.">
    <original>R</original>
    <variation>W</variation>
    <location>
        <position position="394"/>
    </location>
</feature>
<feature type="mutagenesis site" description="Almost complete loss of AMFR-induced 'Lys-27'-linked ubiquitination." evidence="19">
    <original>K</original>
    <variation>R</variation>
    <location>
        <position position="649"/>
    </location>
</feature>
<feature type="mutagenesis site" description="Disrupted zinc-finger; abolished methylation at C-692." evidence="14">
    <original>C</original>
    <variation>S</variation>
    <location>
        <position position="689"/>
    </location>
</feature>
<feature type="mutagenesis site" description="Abolished Cys methylation and ability to bind 'Lys-63'-linked ubiquitin." evidence="14">
    <original>C</original>
    <variation>L</variation>
    <variation>M</variation>
    <location>
        <position position="692"/>
    </location>
</feature>
<feature type="mutagenesis site" description="Disrupted zinc-finger; abolished methylation at C-692." evidence="14">
    <original>C</original>
    <variation>S</variation>
    <location>
        <position position="703"/>
    </location>
</feature>
<feature type="mutagenesis site" description="Disrupted zinc-finger; abolished methylation at C-692." evidence="14">
    <original>C</original>
    <variation>S</variation>
    <location>
        <position position="706"/>
    </location>
</feature>
<sequence length="712" mass="78653">MAQSSPQLDIQVLHDLRQRFPEIPEGVVSQCMLQNNNNLEACCRALSQESSKYLYMEYHSPDDNRMNRNRLLHINLGIHSPSSYHPGDGAQLNGGRTLVHSSSDGHIDPQHAAGKQLICLVQEPHSAPAVVAATPNYNPFFMNEQNRSAATPPSQPPQQPSSMQTGMNPSAMQGPSPPPPPPSYMHIPRYSTNPITVTVSQNLPSGQTVPRALQILPQIPSNLYGSPGSIYIRQTSQSSSGRQTPQSTPWQSSPQGPVPHYSQRPLPVYPHQQNYQPSQYSPKQQQIPQSAYHSPPPSQCPSPFSSPQHQVQPSQLGHIFMPPSPSTTPPHPYQQGPPSYQKQGSHSVAYLPYTASSLSKGSMKKIEITVEPSQRPGTAINRSPSPISNQPSPRNQHSLYTATTPPSSSPSRGISSQPKPPFSVNPVYITYTQPTGPSCTPSPSPRVIPNPTTVFKITVGRATTENLLNLVDQEERSAAPEPIQPISVIPGSGGEKGSHKYQRSSSSGSDDYAYTQALLLHQRARMERLAKQLKLEKEELERLKSEVNGMEHDLMQRRLRRVSCTTAIPTPEEMTRLRSMNRQLQINVDCTLKEVDLLQSRGNFDPKAMNNFYDNIEPGPVVPPKPSKKDSSDPCTIERKARRISVTSKVQADIHDTQAAAADEHRTGSTQSPRTQPRDEDYEGAPWNCDSCTFLNHPALNRCEQCEMPRYT</sequence>
<name>TAB3_HUMAN</name>
<evidence type="ECO:0000255" key="1"/>
<evidence type="ECO:0000255" key="2">
    <source>
        <dbReference type="PROSITE-ProRule" id="PRU00322"/>
    </source>
</evidence>
<evidence type="ECO:0000255" key="3">
    <source>
        <dbReference type="PROSITE-ProRule" id="PRU00468"/>
    </source>
</evidence>
<evidence type="ECO:0000256" key="4">
    <source>
        <dbReference type="SAM" id="MobiDB-lite"/>
    </source>
</evidence>
<evidence type="ECO:0000269" key="5">
    <source>
    </source>
</evidence>
<evidence type="ECO:0000269" key="6">
    <source>
    </source>
</evidence>
<evidence type="ECO:0000269" key="7">
    <source>
    </source>
</evidence>
<evidence type="ECO:0000269" key="8">
    <source>
    </source>
</evidence>
<evidence type="ECO:0000269" key="9">
    <source>
    </source>
</evidence>
<evidence type="ECO:0000269" key="10">
    <source>
    </source>
</evidence>
<evidence type="ECO:0000269" key="11">
    <source>
    </source>
</evidence>
<evidence type="ECO:0000269" key="12">
    <source>
    </source>
</evidence>
<evidence type="ECO:0000269" key="13">
    <source>
    </source>
</evidence>
<evidence type="ECO:0000269" key="14">
    <source>
    </source>
</evidence>
<evidence type="ECO:0000269" key="15">
    <source>
    </source>
</evidence>
<evidence type="ECO:0000269" key="16">
    <source>
    </source>
</evidence>
<evidence type="ECO:0000269" key="17">
    <source>
    </source>
</evidence>
<evidence type="ECO:0000269" key="18">
    <source>
    </source>
</evidence>
<evidence type="ECO:0000269" key="19">
    <source>
    </source>
</evidence>
<evidence type="ECO:0000303" key="20">
    <source>
    </source>
</evidence>
<evidence type="ECO:0000303" key="21">
    <source>
    </source>
</evidence>
<evidence type="ECO:0000312" key="22">
    <source>
        <dbReference type="HGNC" id="HGNC:30681"/>
    </source>
</evidence>
<evidence type="ECO:0007744" key="23">
    <source>
    </source>
</evidence>
<evidence type="ECO:0007744" key="24">
    <source>
    </source>
</evidence>
<evidence type="ECO:0007744" key="25">
    <source>
    </source>
</evidence>
<evidence type="ECO:0007744" key="26">
    <source>
    </source>
</evidence>
<keyword id="KW-0007">Acetylation</keyword>
<keyword id="KW-0025">Alternative splicing</keyword>
<keyword id="KW-0175">Coiled coil</keyword>
<keyword id="KW-1017">Isopeptide bond</keyword>
<keyword id="KW-0479">Metal-binding</keyword>
<keyword id="KW-0488">Methylation</keyword>
<keyword id="KW-0597">Phosphoprotein</keyword>
<keyword id="KW-1267">Proteomics identification</keyword>
<keyword id="KW-1185">Reference proteome</keyword>
<keyword id="KW-0832">Ubl conjugation</keyword>
<keyword id="KW-0862">Zinc</keyword>
<keyword id="KW-0863">Zinc-finger</keyword>
<protein>
    <recommendedName>
        <fullName>TGF-beta-activated kinase 1 and MAP3K7-binding protein 3</fullName>
    </recommendedName>
    <alternativeName>
        <fullName>Mitogen-activated protein kinase kinase kinase 7-interacting protein 3</fullName>
    </alternativeName>
    <alternativeName>
        <fullName>NF-kappa-B-activating protein 1</fullName>
    </alternativeName>
    <alternativeName>
        <fullName evidence="20">TAK1-binding protein 3</fullName>
        <shortName evidence="20">TAB-3</shortName>
    </alternativeName>
    <alternativeName>
        <fullName evidence="20">TGF-beta-activated kinase 1-binding protein 3</fullName>
    </alternativeName>
</protein>
<accession>Q8N5C8</accession>
<accession>A6NDD9</accession>
<accession>Q6VQR0</accession>
<proteinExistence type="evidence at protein level"/>
<comment type="function">
    <text evidence="5 7 8 11 14 19">Adapter required to activate the JNK and NF-kappa-B signaling pathways through the specific recognition of 'Lys-63'-linked polyubiquitin chains by its RanBP2-type zinc finger (NZF) (PubMed:14633987, PubMed:14766965, PubMed:15327770, PubMed:22158122). Acts as an adapter linking MAP3K7/TAK1 and TRAF6 to 'Lys-63'-linked polyubiquitin chains (PubMed:14633987, PubMed:14766965, PubMed:15327770, PubMed:22158122, PubMed:36593296). The RanBP2-type zinc finger (NZF) specifically recognizes Lys-63'-linked polyubiquitin chains unanchored or anchored to the substrate proteins such as RIPK1/RIP1 and RIPK2: this acts as a scaffold to organize a large signaling complex to promote autophosphorylation of MAP3K7/TAK1, and subsequent activation of I-kappa-B-kinase (IKK) core complex by MAP3K7/TAK1 (PubMed:15327770, PubMed:18079694, PubMed:22158122).</text>
</comment>
<comment type="function">
    <molecule>Isoform 2</molecule>
    <text evidence="7">May be an oncogenic factor.</text>
</comment>
<comment type="subunit">
    <text evidence="5 6 7 9 12 13 14 15 18">Interacts with TAB1, TAB2, MAP3K7, TRAF2 and TRAF6 (PubMed:14633987, PubMed:14670075, PubMed:14766965). The minimal TAB3-containing complex (TAB1-MAP3K7-TAB3) appears not to contain TAB2 (PubMed:14670075). However, it seems sensible to consider that TAB2 may also join this complex and may act in a cooperative manner with TAB3 (PubMed:14670075). Interacts with DYNC2I2 (via the WD domains) (PubMed:19521662). Interacts with RBCK1 (PubMed:17449468). Binds 'Lys-63'-linked polyubiquitin chains (PubMed:22158122). Interacts with TRIM5 (PubMed:21512573). Interacts with TRIM38 (via B30.2/SPRY domain), leading to its translocation to lysosomes and degradation (PubMed:24434549). Interacts with ASB1 (PubMed:33431678).</text>
</comment>
<comment type="subunit">
    <text evidence="16">(Microbial infection) Interacts with M.tuberculosis PtpA, which blocks the NF-kappa-B signaling pathway.</text>
</comment>
<comment type="interaction">
    <interactant intactId="EBI-359964">
        <id>Q8N5C8</id>
    </interactant>
    <interactant intactId="EBI-949378">
        <id>Q14457</id>
        <label>BECN1</label>
    </interactant>
    <organismsDiffer>false</organismsDiffer>
    <experiments>9</experiments>
</comment>
<comment type="interaction">
    <interactant intactId="EBI-359964">
        <id>Q8N5C8</id>
    </interactant>
    <interactant intactId="EBI-10181988">
        <id>Q8IYX8-2</id>
        <label>CEP57L1</label>
    </interactant>
    <organismsDiffer>false</organismsDiffer>
    <experiments>3</experiments>
</comment>
<comment type="interaction">
    <interactant intactId="EBI-359964">
        <id>Q8N5C8</id>
    </interactant>
    <interactant intactId="EBI-358684">
        <id>O43318</id>
        <label>MAP3K7</label>
    </interactant>
    <organismsDiffer>false</organismsDiffer>
    <experiments>5</experiments>
</comment>
<comment type="interaction">
    <interactant intactId="EBI-359964">
        <id>Q8N5C8</id>
    </interactant>
    <interactant intactId="EBI-10215880">
        <id>P57077-4</id>
        <label>MAP3K7CL</label>
    </interactant>
    <organismsDiffer>false</organismsDiffer>
    <experiments>6</experiments>
</comment>
<comment type="interaction">
    <interactant intactId="EBI-359964">
        <id>Q8N5C8</id>
    </interactant>
    <interactant intactId="EBI-714158">
        <id>Q13526</id>
        <label>PIN1</label>
    </interactant>
    <organismsDiffer>false</organismsDiffer>
    <experiments>3</experiments>
</comment>
<comment type="interaction">
    <interactant intactId="EBI-359964">
        <id>Q8N5C8</id>
    </interactant>
    <interactant intactId="EBI-1775345">
        <id>Q62073</id>
        <label>Map3k7</label>
    </interactant>
    <organismsDiffer>true</organismsDiffer>
    <experiments>2</experiments>
</comment>
<comment type="interaction">
    <interactant intactId="EBI-15957777">
        <id>Q8N5C8-1</id>
    </interactant>
    <interactant intactId="EBI-15957770">
        <id>B7UI22</id>
        <label>nleE</label>
    </interactant>
    <organismsDiffer>true</organismsDiffer>
    <experiments>7</experiments>
</comment>
<comment type="alternative products">
    <event type="alternative splicing"/>
    <isoform>
        <id>Q8N5C8-1</id>
        <name>1</name>
        <name>Tab3a</name>
        <sequence type="displayed"/>
    </isoform>
    <isoform>
        <id>Q8N5C8-2</id>
        <name>2</name>
        <name>Tab3b</name>
        <sequence type="described" ref="VSP_017516"/>
    </isoform>
</comment>
<comment type="tissue specificity">
    <text evidence="6">Widely expressed. Constitutively overexpressed in certain tumor tissues.</text>
</comment>
<comment type="tissue specificity">
    <molecule>Isoform 1</molecule>
    <text evidence="7">Major transcript.</text>
</comment>
<comment type="tissue specificity">
    <molecule>Isoform 2</molecule>
    <text evidence="7">Minor transcript.</text>
</comment>
<comment type="domain">
    <text evidence="14">The RanBP2-type zinc finger (NZF) mediates binding to two consecutive 'Lys-63'-linked ubiquitins.</text>
</comment>
<comment type="PTM">
    <text evidence="5 19">Ubiquitinated; following IL1 stimulation or TRAF6 overexpression (PubMed:14633987). Ubiquitinated by AMFR via 'Lys-27'-linked polyubiquitination; leading to TAK1/MAP3K7 activation (PubMed:36593296).</text>
</comment>
<comment type="PTM">
    <text evidence="15">Degraded in a lysosome-dependent manner following interaction with TRIM38.</text>
</comment>
<comment type="PTM">
    <text evidence="5 6 10">Phosphorylated at Ser-506 by MAPKAPK2 and MAPKAPK3 following IL1 treatment.</text>
</comment>
<comment type="PTM">
    <text evidence="14 17">(Microbial infection) Methylated at Cys-692 by enteropathogenic E.coli protein NleE or S.flexneri protein OspZ: methylation disrupts zinc-binding and ability to bind 'Lys-63'-linked ubiquitin, leading to NF-kappa-B inactivation.</text>
</comment>
<reference key="1">
    <citation type="journal article" date="2003" name="EMBO J.">
        <title>Role of the TAB2-related protein TAB3 in IL-1 and TNF signaling.</title>
        <authorList>
            <person name="Ishitani T."/>
            <person name="Takaesu G."/>
            <person name="Ninomiya-Tsuji J."/>
            <person name="Shibuya H."/>
            <person name="Gaynor R.B."/>
            <person name="Matsumoto K."/>
        </authorList>
    </citation>
    <scope>NUCLEOTIDE SEQUENCE [MRNA] (ISOFORM 1)</scope>
    <scope>INTERACTION WITH MAP3K7; TRAF2 AND TRAF6</scope>
    <scope>UBIQUITINATION</scope>
    <scope>PHOSPHORYLATION</scope>
    <scope>FUNCTION</scope>
    <source>
        <tissue>Kidney</tissue>
    </source>
</reference>
<reference key="2">
    <citation type="journal article" date="2004" name="Biochem. J.">
        <title>TAB3, a new binding partner of the protein kinase TAK1.</title>
        <authorList>
            <person name="Cheung P.C."/>
            <person name="Nebreda A.R."/>
            <person name="Cohen P."/>
        </authorList>
    </citation>
    <scope>NUCLEOTIDE SEQUENCE [MRNA] (ISOFORM 1)</scope>
    <scope>TISSUE SPECIFICITY</scope>
    <scope>PHOSPHORYLATION</scope>
    <scope>INTERACTION WITH TAB1; TAB2 AND MAP3K7</scope>
</reference>
<reference key="3">
    <citation type="journal article" date="2004" name="Proc. Natl. Acad. Sci. U.S.A.">
        <title>Identification of a human NF-kappaB-activating protein, TAB3.</title>
        <authorList>
            <person name="Jin G."/>
            <person name="Klika A."/>
            <person name="Callahan M."/>
            <person name="Faga B."/>
            <person name="Danzig J."/>
            <person name="Jiang Z."/>
            <person name="Li X."/>
            <person name="Stark G.R."/>
            <person name="Harrington J."/>
            <person name="Sherf B."/>
        </authorList>
    </citation>
    <scope>NUCLEOTIDE SEQUENCE [MRNA] (ISOFORMS 1 AND 2)</scope>
    <scope>INTERACTION WITH MAP3K7 AND TRAF6</scope>
    <scope>TISSUE SPECIFICITY</scope>
    <scope>FUNCTION</scope>
</reference>
<reference key="4">
    <citation type="journal article" date="2005" name="Nature">
        <title>The DNA sequence of the human X chromosome.</title>
        <authorList>
            <person name="Ross M.T."/>
            <person name="Grafham D.V."/>
            <person name="Coffey A.J."/>
            <person name="Scherer S."/>
            <person name="McLay K."/>
            <person name="Muzny D."/>
            <person name="Platzer M."/>
            <person name="Howell G.R."/>
            <person name="Burrows C."/>
            <person name="Bird C.P."/>
            <person name="Frankish A."/>
            <person name="Lovell F.L."/>
            <person name="Howe K.L."/>
            <person name="Ashurst J.L."/>
            <person name="Fulton R.S."/>
            <person name="Sudbrak R."/>
            <person name="Wen G."/>
            <person name="Jones M.C."/>
            <person name="Hurles M.E."/>
            <person name="Andrews T.D."/>
            <person name="Scott C.E."/>
            <person name="Searle S."/>
            <person name="Ramser J."/>
            <person name="Whittaker A."/>
            <person name="Deadman R."/>
            <person name="Carter N.P."/>
            <person name="Hunt S.E."/>
            <person name="Chen R."/>
            <person name="Cree A."/>
            <person name="Gunaratne P."/>
            <person name="Havlak P."/>
            <person name="Hodgson A."/>
            <person name="Metzker M.L."/>
            <person name="Richards S."/>
            <person name="Scott G."/>
            <person name="Steffen D."/>
            <person name="Sodergren E."/>
            <person name="Wheeler D.A."/>
            <person name="Worley K.C."/>
            <person name="Ainscough R."/>
            <person name="Ambrose K.D."/>
            <person name="Ansari-Lari M.A."/>
            <person name="Aradhya S."/>
            <person name="Ashwell R.I."/>
            <person name="Babbage A.K."/>
            <person name="Bagguley C.L."/>
            <person name="Ballabio A."/>
            <person name="Banerjee R."/>
            <person name="Barker G.E."/>
            <person name="Barlow K.F."/>
            <person name="Barrett I.P."/>
            <person name="Bates K.N."/>
            <person name="Beare D.M."/>
            <person name="Beasley H."/>
            <person name="Beasley O."/>
            <person name="Beck A."/>
            <person name="Bethel G."/>
            <person name="Blechschmidt K."/>
            <person name="Brady N."/>
            <person name="Bray-Allen S."/>
            <person name="Bridgeman A.M."/>
            <person name="Brown A.J."/>
            <person name="Brown M.J."/>
            <person name="Bonnin D."/>
            <person name="Bruford E.A."/>
            <person name="Buhay C."/>
            <person name="Burch P."/>
            <person name="Burford D."/>
            <person name="Burgess J."/>
            <person name="Burrill W."/>
            <person name="Burton J."/>
            <person name="Bye J.M."/>
            <person name="Carder C."/>
            <person name="Carrel L."/>
            <person name="Chako J."/>
            <person name="Chapman J.C."/>
            <person name="Chavez D."/>
            <person name="Chen E."/>
            <person name="Chen G."/>
            <person name="Chen Y."/>
            <person name="Chen Z."/>
            <person name="Chinault C."/>
            <person name="Ciccodicola A."/>
            <person name="Clark S.Y."/>
            <person name="Clarke G."/>
            <person name="Clee C.M."/>
            <person name="Clegg S."/>
            <person name="Clerc-Blankenburg K."/>
            <person name="Clifford K."/>
            <person name="Cobley V."/>
            <person name="Cole C.G."/>
            <person name="Conquer J.S."/>
            <person name="Corby N."/>
            <person name="Connor R.E."/>
            <person name="David R."/>
            <person name="Davies J."/>
            <person name="Davis C."/>
            <person name="Davis J."/>
            <person name="Delgado O."/>
            <person name="Deshazo D."/>
            <person name="Dhami P."/>
            <person name="Ding Y."/>
            <person name="Dinh H."/>
            <person name="Dodsworth S."/>
            <person name="Draper H."/>
            <person name="Dugan-Rocha S."/>
            <person name="Dunham A."/>
            <person name="Dunn M."/>
            <person name="Durbin K.J."/>
            <person name="Dutta I."/>
            <person name="Eades T."/>
            <person name="Ellwood M."/>
            <person name="Emery-Cohen A."/>
            <person name="Errington H."/>
            <person name="Evans K.L."/>
            <person name="Faulkner L."/>
            <person name="Francis F."/>
            <person name="Frankland J."/>
            <person name="Fraser A.E."/>
            <person name="Galgoczy P."/>
            <person name="Gilbert J."/>
            <person name="Gill R."/>
            <person name="Gloeckner G."/>
            <person name="Gregory S.G."/>
            <person name="Gribble S."/>
            <person name="Griffiths C."/>
            <person name="Grocock R."/>
            <person name="Gu Y."/>
            <person name="Gwilliam R."/>
            <person name="Hamilton C."/>
            <person name="Hart E.A."/>
            <person name="Hawes A."/>
            <person name="Heath P.D."/>
            <person name="Heitmann K."/>
            <person name="Hennig S."/>
            <person name="Hernandez J."/>
            <person name="Hinzmann B."/>
            <person name="Ho S."/>
            <person name="Hoffs M."/>
            <person name="Howden P.J."/>
            <person name="Huckle E.J."/>
            <person name="Hume J."/>
            <person name="Hunt P.J."/>
            <person name="Hunt A.R."/>
            <person name="Isherwood J."/>
            <person name="Jacob L."/>
            <person name="Johnson D."/>
            <person name="Jones S."/>
            <person name="de Jong P.J."/>
            <person name="Joseph S.S."/>
            <person name="Keenan S."/>
            <person name="Kelly S."/>
            <person name="Kershaw J.K."/>
            <person name="Khan Z."/>
            <person name="Kioschis P."/>
            <person name="Klages S."/>
            <person name="Knights A.J."/>
            <person name="Kosiura A."/>
            <person name="Kovar-Smith C."/>
            <person name="Laird G.K."/>
            <person name="Langford C."/>
            <person name="Lawlor S."/>
            <person name="Leversha M."/>
            <person name="Lewis L."/>
            <person name="Liu W."/>
            <person name="Lloyd C."/>
            <person name="Lloyd D.M."/>
            <person name="Loulseged H."/>
            <person name="Loveland J.E."/>
            <person name="Lovell J.D."/>
            <person name="Lozado R."/>
            <person name="Lu J."/>
            <person name="Lyne R."/>
            <person name="Ma J."/>
            <person name="Maheshwari M."/>
            <person name="Matthews L.H."/>
            <person name="McDowall J."/>
            <person name="McLaren S."/>
            <person name="McMurray A."/>
            <person name="Meidl P."/>
            <person name="Meitinger T."/>
            <person name="Milne S."/>
            <person name="Miner G."/>
            <person name="Mistry S.L."/>
            <person name="Morgan M."/>
            <person name="Morris S."/>
            <person name="Mueller I."/>
            <person name="Mullikin J.C."/>
            <person name="Nguyen N."/>
            <person name="Nordsiek G."/>
            <person name="Nyakatura G."/>
            <person name="O'dell C.N."/>
            <person name="Okwuonu G."/>
            <person name="Palmer S."/>
            <person name="Pandian R."/>
            <person name="Parker D."/>
            <person name="Parrish J."/>
            <person name="Pasternak S."/>
            <person name="Patel D."/>
            <person name="Pearce A.V."/>
            <person name="Pearson D.M."/>
            <person name="Pelan S.E."/>
            <person name="Perez L."/>
            <person name="Porter K.M."/>
            <person name="Ramsey Y."/>
            <person name="Reichwald K."/>
            <person name="Rhodes S."/>
            <person name="Ridler K.A."/>
            <person name="Schlessinger D."/>
            <person name="Schueler M.G."/>
            <person name="Sehra H.K."/>
            <person name="Shaw-Smith C."/>
            <person name="Shen H."/>
            <person name="Sheridan E.M."/>
            <person name="Shownkeen R."/>
            <person name="Skuce C.D."/>
            <person name="Smith M.L."/>
            <person name="Sotheran E.C."/>
            <person name="Steingruber H.E."/>
            <person name="Steward C.A."/>
            <person name="Storey R."/>
            <person name="Swann R.M."/>
            <person name="Swarbreck D."/>
            <person name="Tabor P.E."/>
            <person name="Taudien S."/>
            <person name="Taylor T."/>
            <person name="Teague B."/>
            <person name="Thomas K."/>
            <person name="Thorpe A."/>
            <person name="Timms K."/>
            <person name="Tracey A."/>
            <person name="Trevanion S."/>
            <person name="Tromans A.C."/>
            <person name="d'Urso M."/>
            <person name="Verduzco D."/>
            <person name="Villasana D."/>
            <person name="Waldron L."/>
            <person name="Wall M."/>
            <person name="Wang Q."/>
            <person name="Warren J."/>
            <person name="Warry G.L."/>
            <person name="Wei X."/>
            <person name="West A."/>
            <person name="Whitehead S.L."/>
            <person name="Whiteley M.N."/>
            <person name="Wilkinson J.E."/>
            <person name="Willey D.L."/>
            <person name="Williams G."/>
            <person name="Williams L."/>
            <person name="Williamson A."/>
            <person name="Williamson H."/>
            <person name="Wilming L."/>
            <person name="Woodmansey R.L."/>
            <person name="Wray P.W."/>
            <person name="Yen J."/>
            <person name="Zhang J."/>
            <person name="Zhou J."/>
            <person name="Zoghbi H."/>
            <person name="Zorilla S."/>
            <person name="Buck D."/>
            <person name="Reinhardt R."/>
            <person name="Poustka A."/>
            <person name="Rosenthal A."/>
            <person name="Lehrach H."/>
            <person name="Meindl A."/>
            <person name="Minx P.J."/>
            <person name="Hillier L.W."/>
            <person name="Willard H.F."/>
            <person name="Wilson R.K."/>
            <person name="Waterston R.H."/>
            <person name="Rice C.M."/>
            <person name="Vaudin M."/>
            <person name="Coulson A."/>
            <person name="Nelson D.L."/>
            <person name="Weinstock G."/>
            <person name="Sulston J.E."/>
            <person name="Durbin R.M."/>
            <person name="Hubbard T."/>
            <person name="Gibbs R.A."/>
            <person name="Beck S."/>
            <person name="Rogers J."/>
            <person name="Bentley D.R."/>
        </authorList>
    </citation>
    <scope>NUCLEOTIDE SEQUENCE [LARGE SCALE GENOMIC DNA]</scope>
</reference>
<reference key="5">
    <citation type="journal article" date="2004" name="Genome Res.">
        <title>The status, quality, and expansion of the NIH full-length cDNA project: the Mammalian Gene Collection (MGC).</title>
        <authorList>
            <consortium name="The MGC Project Team"/>
        </authorList>
    </citation>
    <scope>NUCLEOTIDE SEQUENCE [LARGE SCALE MRNA] (ISOFORM 1)</scope>
    <source>
        <tissue>Eye</tissue>
    </source>
</reference>
<reference key="6">
    <citation type="journal article" date="2004" name="Mol. Cell">
        <title>TAB2 and TAB3 activate the NF-kappaB pathway through binding to polyubiquitin chains.</title>
        <authorList>
            <person name="Kanayama A."/>
            <person name="Seth R.B."/>
            <person name="Sun L."/>
            <person name="Ea C.K."/>
            <person name="Hong M."/>
            <person name="Shaito A."/>
            <person name="Chiu Y.H."/>
            <person name="Deng L."/>
            <person name="Chen Z.J."/>
        </authorList>
    </citation>
    <scope>FUNCTION</scope>
</reference>
<reference key="7">
    <citation type="journal article" date="2007" name="J. Biol. Chem.">
        <title>RBCK1 negatively regulates tumor necrosis factor- and interleukin-1-triggered NF-kappaB activation by targeting TAB2/3 for degradation.</title>
        <authorList>
            <person name="Tian Y."/>
            <person name="Zhang Y."/>
            <person name="Zhong B."/>
            <person name="Wang Y.Y."/>
            <person name="Diao F.C."/>
            <person name="Wang R.P."/>
            <person name="Zhang M."/>
            <person name="Chen D.Y."/>
            <person name="Zhai Z.H."/>
            <person name="Shu H.B."/>
        </authorList>
    </citation>
    <scope>INTERACTION WITH RBCK1</scope>
</reference>
<reference key="8">
    <citation type="journal article" date="2008" name="Biochem. J.">
        <title>Roles for TAB1 in regulating the IL-1-dependent phosphorylation of the TAB3 regulatory subunit and activity of the TAK1 complex.</title>
        <authorList>
            <person name="Mendoza H."/>
            <person name="Campbell D.G."/>
            <person name="Burness K."/>
            <person name="Hastie J."/>
            <person name="Ronkina N."/>
            <person name="Shim J.H."/>
            <person name="Arthur J.S."/>
            <person name="Davis R.J."/>
            <person name="Gaestel M."/>
            <person name="Johnson G.L."/>
            <person name="Ghosh S."/>
            <person name="Cohen P."/>
        </authorList>
    </citation>
    <scope>PHOSPHORYLATION AT SER-506</scope>
</reference>
<reference key="9">
    <citation type="journal article" date="2008" name="EMBO J.">
        <title>A critical role of RICK/RIP2 polyubiquitination in Nod-induced NF-kappaB activation.</title>
        <authorList>
            <person name="Hasegawa M."/>
            <person name="Fujimoto Y."/>
            <person name="Lucas P.C."/>
            <person name="Nakano H."/>
            <person name="Fukase K."/>
            <person name="Nunez G."/>
            <person name="Inohara N."/>
        </authorList>
    </citation>
    <scope>FUNCTION</scope>
</reference>
<reference key="10">
    <citation type="journal article" date="2008" name="Proc. Natl. Acad. Sci. U.S.A.">
        <title>A quantitative atlas of mitotic phosphorylation.</title>
        <authorList>
            <person name="Dephoure N."/>
            <person name="Zhou C."/>
            <person name="Villen J."/>
            <person name="Beausoleil S.A."/>
            <person name="Bakalarski C.E."/>
            <person name="Elledge S.J."/>
            <person name="Gygi S.P."/>
        </authorList>
    </citation>
    <scope>PHOSPHORYLATION [LARGE SCALE ANALYSIS] AT SER-60; THR-404 AND SER-492</scope>
    <scope>IDENTIFICATION BY MASS SPECTROMETRY [LARGE SCALE ANALYSIS]</scope>
    <source>
        <tissue>Cervix carcinoma</tissue>
    </source>
</reference>
<reference key="11">
    <citation type="journal article" date="2009" name="Cell. Mol. Life Sci.">
        <title>WDR34 is a novel TAK1-associated suppressor of the IL-1R/TLR3/TLR4-induced NF-kappaB activation pathway.</title>
        <authorList>
            <person name="Gao D."/>
            <person name="Wang R."/>
            <person name="Li B."/>
            <person name="Yang Y."/>
            <person name="Zhai Z."/>
            <person name="Chen D.Y."/>
        </authorList>
    </citation>
    <scope>INTERACTION WITH DYNC2I2</scope>
</reference>
<reference key="12">
    <citation type="journal article" date="2010" name="Sci. Signal.">
        <title>Quantitative phosphoproteomics reveals widespread full phosphorylation site occupancy during mitosis.</title>
        <authorList>
            <person name="Olsen J.V."/>
            <person name="Vermeulen M."/>
            <person name="Santamaria A."/>
            <person name="Kumar C."/>
            <person name="Miller M.L."/>
            <person name="Jensen L.J."/>
            <person name="Gnad F."/>
            <person name="Cox J."/>
            <person name="Jensen T.S."/>
            <person name="Nigg E.A."/>
            <person name="Brunak S."/>
            <person name="Mann M."/>
        </authorList>
    </citation>
    <scope>ACETYLATION [LARGE SCALE ANALYSIS] AT ALA-2</scope>
    <scope>PHOSPHORYLATION [LARGE SCALE ANALYSIS] AT SER-60</scope>
    <scope>CLEAVAGE OF INITIATOR METHIONINE [LARGE SCALE ANALYSIS]</scope>
    <scope>IDENTIFICATION BY MASS SPECTROMETRY [LARGE SCALE ANALYSIS]</scope>
    <source>
        <tissue>Cervix carcinoma</tissue>
    </source>
</reference>
<reference key="13">
    <citation type="journal article" date="2011" name="Nature">
        <title>Cysteine methylation disrupts ubiquitin-chain sensing in NF-kappaB activation.</title>
        <authorList>
            <person name="Zhang L."/>
            <person name="Ding X."/>
            <person name="Cui J."/>
            <person name="Xu H."/>
            <person name="Chen J."/>
            <person name="Gong Y.N."/>
            <person name="Hu L."/>
            <person name="Zhou Y."/>
            <person name="Ge J."/>
            <person name="Lu Q."/>
            <person name="Liu L."/>
            <person name="Chen S."/>
            <person name="Shao F."/>
        </authorList>
    </citation>
    <scope>FUNCTION</scope>
    <scope>DOMAIN</scope>
    <scope>METHYLATION AT CYS-692 (MICROBIAL INFECTION)</scope>
    <scope>MUTAGENESIS OF CYS-689; CYS-692; CYS-703 AND CYS-706</scope>
</reference>
<reference key="14">
    <citation type="journal article" date="2011" name="Nature">
        <title>TRIM5 is an innate immune sensor for the retrovirus capsid lattice.</title>
        <authorList>
            <person name="Pertel T."/>
            <person name="Hausmann S."/>
            <person name="Morger D."/>
            <person name="Zueger S."/>
            <person name="Guerra J."/>
            <person name="Lascano J."/>
            <person name="Reinhard C."/>
            <person name="Santoni F.A."/>
            <person name="Uchil P.D."/>
            <person name="Chatel L."/>
            <person name="Bisiaux A."/>
            <person name="Albert M.L."/>
            <person name="Strambio-De-Castillia C."/>
            <person name="Mothes W."/>
            <person name="Pizzato M."/>
            <person name="Gruetter M.G."/>
            <person name="Luban J."/>
        </authorList>
    </citation>
    <scope>INTERACTION WITH TRIM5</scope>
</reference>
<reference key="15">
    <citation type="journal article" date="2013" name="J. Proteome Res.">
        <title>Toward a comprehensive characterization of a human cancer cell phosphoproteome.</title>
        <authorList>
            <person name="Zhou H."/>
            <person name="Di Palma S."/>
            <person name="Preisinger C."/>
            <person name="Peng M."/>
            <person name="Polat A.N."/>
            <person name="Heck A.J."/>
            <person name="Mohammed S."/>
        </authorList>
    </citation>
    <scope>PHOSPHORYLATION [LARGE SCALE ANALYSIS] AT SER-103; SER-385; THR-404 AND SER-409</scope>
    <scope>IDENTIFICATION BY MASS SPECTROMETRY [LARGE SCALE ANALYSIS]</scope>
    <source>
        <tissue>Cervix carcinoma</tissue>
        <tissue>Erythroleukemia</tissue>
    </source>
</reference>
<reference key="16">
    <citation type="journal article" date="2014" name="J. Proteomics">
        <title>An enzyme assisted RP-RPLC approach for in-depth analysis of human liver phosphoproteome.</title>
        <authorList>
            <person name="Bian Y."/>
            <person name="Song C."/>
            <person name="Cheng K."/>
            <person name="Dong M."/>
            <person name="Wang F."/>
            <person name="Huang J."/>
            <person name="Sun D."/>
            <person name="Wang L."/>
            <person name="Ye M."/>
            <person name="Zou H."/>
        </authorList>
    </citation>
    <scope>PHOSPHORYLATION [LARGE SCALE ANALYSIS] AT SER-101</scope>
    <scope>IDENTIFICATION BY MASS SPECTROMETRY [LARGE SCALE ANALYSIS]</scope>
    <source>
        <tissue>Liver</tissue>
    </source>
</reference>
<reference key="17">
    <citation type="journal article" date="2014" name="Proc. Natl. Acad. Sci. U.S.A.">
        <title>TRIM38 inhibits TNFalpha- and IL-1beta-triggered NF-kappaB activation by mediating lysosome-dependent degradation of TAB2/3.</title>
        <authorList>
            <person name="Hu M.M."/>
            <person name="Yang Q."/>
            <person name="Zhang J."/>
            <person name="Liu S.M."/>
            <person name="Zhang Y."/>
            <person name="Lin H."/>
            <person name="Huang Z.F."/>
            <person name="Wang Y.Y."/>
            <person name="Zhang X.D."/>
            <person name="Zhong B."/>
            <person name="Shu H.B."/>
        </authorList>
    </citation>
    <scope>SUBCELLULAR LOCATION</scope>
    <scope>DEGRADATION</scope>
    <scope>INTERACTION WITH TRIM38</scope>
</reference>
<reference key="18">
    <citation type="journal article" date="2015" name="Nat. Immunol.">
        <title>Mycobacterium tuberculosis suppresses innate immunity by coopting the host ubiquitin system.</title>
        <authorList>
            <person name="Wang J."/>
            <person name="Li B.X."/>
            <person name="Ge P.P."/>
            <person name="Li J."/>
            <person name="Wang Q."/>
            <person name="Gao G.F."/>
            <person name="Qiu X.B."/>
            <person name="Liu C.H."/>
        </authorList>
    </citation>
    <scope>INTERACTION WITH MYCOBACTERIUM TUBERCULOSIS PTPA (MICROBIAL INFECTION)</scope>
</reference>
<reference key="19">
    <citation type="journal article" date="2016" name="J. Biol. Chem.">
        <title>Identification of a distinct substrate-binding domain in the bacterial cysteine methyltransferase effectors NleE and OspZ.</title>
        <authorList>
            <person name="Zhang Y."/>
            <person name="Muehlen S."/>
            <person name="Oates C.V."/>
            <person name="Pearson J.S."/>
            <person name="Hartland E.L."/>
        </authorList>
    </citation>
    <scope>METHYLATION (MICROBIAL INFECTION)</scope>
</reference>
<reference key="20">
    <citation type="journal article" date="2021" name="Proc. Natl. Acad. Sci. U.S.A.">
        <title>An unconventional role of an ASB family protein in NF-kappaB activation and inflammatory response during microbial infection and colitis.</title>
        <authorList>
            <person name="Hou P."/>
            <person name="Jia P."/>
            <person name="Yang K."/>
            <person name="Li Z."/>
            <person name="Tian T."/>
            <person name="Lin Y."/>
            <person name="Zeng W."/>
            <person name="Xing F."/>
            <person name="Chen Y."/>
            <person name="Li C."/>
            <person name="Liu Y."/>
            <person name="Guo D."/>
        </authorList>
    </citation>
    <scope>INTERACTION WITH ASB1</scope>
</reference>
<reference key="21">
    <citation type="journal article" date="2023" name="Nat. Microbiol.">
        <title>Staphylococcal virulence factor HlgB targets the endoplasmic-reticulum-resident E3 ubiquitin ligase AMFR to promote pneumonia.</title>
        <authorList>
            <person name="Sun L."/>
            <person name="Zhang H."/>
            <person name="Zhang H."/>
            <person name="Lou X."/>
            <person name="Wang Z."/>
            <person name="Wu Y."/>
            <person name="Yang X."/>
            <person name="Chen D."/>
            <person name="Guo B."/>
            <person name="Zhang A."/>
            <person name="Qian F."/>
        </authorList>
    </citation>
    <scope>FUNCTION</scope>
    <scope>MUTAGENESIS OF LYS-649</scope>
    <scope>UBIQUITINATION BY AMFR</scope>
</reference>
<dbReference type="EMBL" id="AY437560">
    <property type="protein sequence ID" value="AAR06179.1"/>
    <property type="molecule type" value="mRNA"/>
</dbReference>
<dbReference type="EMBL" id="AY371491">
    <property type="protein sequence ID" value="AAQ88279.1"/>
    <property type="molecule type" value="mRNA"/>
</dbReference>
<dbReference type="EMBL" id="AY331591">
    <property type="protein sequence ID" value="AAQ92938.1"/>
    <property type="molecule type" value="mRNA"/>
</dbReference>
<dbReference type="EMBL" id="AY331592">
    <property type="protein sequence ID" value="AAQ92939.1"/>
    <property type="molecule type" value="mRNA"/>
</dbReference>
<dbReference type="EMBL" id="AC108359">
    <property type="status" value="NOT_ANNOTATED_CDS"/>
    <property type="molecule type" value="Genomic_DNA"/>
</dbReference>
<dbReference type="EMBL" id="BC032526">
    <property type="protein sequence ID" value="AAH32526.1"/>
    <property type="molecule type" value="mRNA"/>
</dbReference>
<dbReference type="CCDS" id="CCDS14226.1">
    <molecule id="Q8N5C8-1"/>
</dbReference>
<dbReference type="CCDS" id="CCDS94584.1">
    <molecule id="Q8N5C8-2"/>
</dbReference>
<dbReference type="RefSeq" id="NP_001386801.1">
    <molecule id="Q8N5C8-2"/>
    <property type="nucleotide sequence ID" value="NM_001399872.1"/>
</dbReference>
<dbReference type="RefSeq" id="NP_690000.3">
    <molecule id="Q8N5C8-1"/>
    <property type="nucleotide sequence ID" value="NM_152787.5"/>
</dbReference>
<dbReference type="RefSeq" id="XP_005274540.2">
    <property type="nucleotide sequence ID" value="XM_005274483.3"/>
</dbReference>
<dbReference type="RefSeq" id="XP_047297942.1">
    <molecule id="Q8N5C8-1"/>
    <property type="nucleotide sequence ID" value="XM_047441986.1"/>
</dbReference>
<dbReference type="RefSeq" id="XP_054182793.1">
    <molecule id="Q8N5C8-1"/>
    <property type="nucleotide sequence ID" value="XM_054326818.1"/>
</dbReference>
<dbReference type="SMR" id="Q8N5C8"/>
<dbReference type="BioGRID" id="129216">
    <property type="interactions" value="67"/>
</dbReference>
<dbReference type="ComplexPortal" id="CPX-25730">
    <property type="entry name" value="TAK1-TAB complex, TAB3 variant"/>
</dbReference>
<dbReference type="CORUM" id="Q8N5C8"/>
<dbReference type="DIP" id="DIP-32489N"/>
<dbReference type="FunCoup" id="Q8N5C8">
    <property type="interactions" value="1998"/>
</dbReference>
<dbReference type="IntAct" id="Q8N5C8">
    <property type="interactions" value="26"/>
</dbReference>
<dbReference type="MINT" id="Q8N5C8"/>
<dbReference type="STRING" id="9606.ENSP00000368215"/>
<dbReference type="ChEMBL" id="CHEMBL4295902"/>
<dbReference type="GlyCosmos" id="Q8N5C8">
    <property type="glycosylation" value="4 sites, 1 glycan"/>
</dbReference>
<dbReference type="GlyGen" id="Q8N5C8">
    <property type="glycosylation" value="8 sites, 1 O-linked glycan (6 sites)"/>
</dbReference>
<dbReference type="iPTMnet" id="Q8N5C8"/>
<dbReference type="PhosphoSitePlus" id="Q8N5C8"/>
<dbReference type="BioMuta" id="TAB3"/>
<dbReference type="DMDM" id="229462756"/>
<dbReference type="jPOST" id="Q8N5C8"/>
<dbReference type="MassIVE" id="Q8N5C8"/>
<dbReference type="PaxDb" id="9606-ENSP00000368215"/>
<dbReference type="PeptideAtlas" id="Q8N5C8"/>
<dbReference type="ProteomicsDB" id="72035">
    <molecule id="Q8N5C8-1"/>
</dbReference>
<dbReference type="ProteomicsDB" id="72036">
    <molecule id="Q8N5C8-2"/>
</dbReference>
<dbReference type="Pumba" id="Q8N5C8"/>
<dbReference type="Antibodypedia" id="24709">
    <property type="antibodies" value="296 antibodies from 39 providers"/>
</dbReference>
<dbReference type="DNASU" id="257397"/>
<dbReference type="Ensembl" id="ENST00000288422.4">
    <molecule id="Q8N5C8-1"/>
    <property type="protein sequence ID" value="ENSP00000288422.4"/>
    <property type="gene ID" value="ENSG00000157625.16"/>
</dbReference>
<dbReference type="Ensembl" id="ENST00000378930.7">
    <molecule id="Q8N5C8-1"/>
    <property type="protein sequence ID" value="ENSP00000368212.3"/>
    <property type="gene ID" value="ENSG00000157625.16"/>
</dbReference>
<dbReference type="Ensembl" id="ENST00000378932.6">
    <molecule id="Q8N5C8-2"/>
    <property type="protein sequence ID" value="ENSP00000368214.2"/>
    <property type="gene ID" value="ENSG00000157625.16"/>
</dbReference>
<dbReference type="Ensembl" id="ENST00000378933.5">
    <molecule id="Q8N5C8-1"/>
    <property type="protein sequence ID" value="ENSP00000368215.1"/>
    <property type="gene ID" value="ENSG00000157625.16"/>
</dbReference>
<dbReference type="GeneID" id="257397"/>
<dbReference type="KEGG" id="hsa:257397"/>
<dbReference type="MANE-Select" id="ENST00000288422.4">
    <property type="protein sequence ID" value="ENSP00000288422.4"/>
    <property type="RefSeq nucleotide sequence ID" value="NM_152787.5"/>
    <property type="RefSeq protein sequence ID" value="NP_690000.3"/>
</dbReference>
<dbReference type="UCSC" id="uc004dck.3">
    <molecule id="Q8N5C8-1"/>
    <property type="organism name" value="human"/>
</dbReference>
<dbReference type="AGR" id="HGNC:30681"/>
<dbReference type="CTD" id="257397"/>
<dbReference type="DisGeNET" id="257397"/>
<dbReference type="GeneCards" id="TAB3"/>
<dbReference type="HGNC" id="HGNC:30681">
    <property type="gene designation" value="TAB3"/>
</dbReference>
<dbReference type="HPA" id="ENSG00000157625">
    <property type="expression patterns" value="Low tissue specificity"/>
</dbReference>
<dbReference type="MIM" id="300480">
    <property type="type" value="gene"/>
</dbReference>
<dbReference type="neXtProt" id="NX_Q8N5C8"/>
<dbReference type="OpenTargets" id="ENSG00000157625"/>
<dbReference type="PharmGKB" id="PA165757406"/>
<dbReference type="VEuPathDB" id="HostDB:ENSG00000157625"/>
<dbReference type="eggNOG" id="ENOG502QVTR">
    <property type="taxonomic scope" value="Eukaryota"/>
</dbReference>
<dbReference type="GeneTree" id="ENSGT00940000159499"/>
<dbReference type="HOGENOM" id="CLU_025065_1_0_1"/>
<dbReference type="InParanoid" id="Q8N5C8"/>
<dbReference type="OMA" id="WACNLCT"/>
<dbReference type="OrthoDB" id="6288762at2759"/>
<dbReference type="PAN-GO" id="Q8N5C8">
    <property type="GO annotations" value="1 GO annotation based on evolutionary models"/>
</dbReference>
<dbReference type="PhylomeDB" id="Q8N5C8"/>
<dbReference type="TreeFam" id="TF332021"/>
<dbReference type="PathwayCommons" id="Q8N5C8"/>
<dbReference type="Reactome" id="R-HSA-168638">
    <property type="pathway name" value="NOD1/2 Signaling Pathway"/>
</dbReference>
<dbReference type="Reactome" id="R-HSA-2871837">
    <property type="pathway name" value="FCERI mediated NF-kB activation"/>
</dbReference>
<dbReference type="Reactome" id="R-HSA-445989">
    <property type="pathway name" value="TAK1-dependent IKK and NF-kappa-B activation"/>
</dbReference>
<dbReference type="Reactome" id="R-HSA-450302">
    <property type="pathway name" value="activated TAK1 mediates p38 MAPK activation"/>
</dbReference>
<dbReference type="Reactome" id="R-HSA-450321">
    <property type="pathway name" value="JNK (c-Jun kinases) phosphorylation and activation mediated by activated human TAK1"/>
</dbReference>
<dbReference type="Reactome" id="R-HSA-5357956">
    <property type="pathway name" value="TNFR1-induced NF-kappa-B signaling pathway"/>
</dbReference>
<dbReference type="Reactome" id="R-HSA-5607764">
    <property type="pathway name" value="CLEC7A (Dectin-1) signaling"/>
</dbReference>
<dbReference type="Reactome" id="R-HSA-9014325">
    <property type="pathway name" value="TICAM1,TRAF6-dependent induction of TAK1 complex"/>
</dbReference>
<dbReference type="Reactome" id="R-HSA-9020702">
    <property type="pathway name" value="Interleukin-1 signaling"/>
</dbReference>
<dbReference type="Reactome" id="R-HSA-937042">
    <property type="pathway name" value="IRAK2 mediated activation of TAK1 complex"/>
</dbReference>
<dbReference type="Reactome" id="R-HSA-937072">
    <property type="pathway name" value="TRAF6-mediated induction of TAK1 complex within TLR4 complex"/>
</dbReference>
<dbReference type="Reactome" id="R-HSA-9645460">
    <property type="pathway name" value="Alpha-protein kinase 1 signaling pathway"/>
</dbReference>
<dbReference type="Reactome" id="R-HSA-9705671">
    <property type="pathway name" value="SARS-CoV-2 activates/modulates innate and adaptive immune responses"/>
</dbReference>
<dbReference type="Reactome" id="R-HSA-975163">
    <property type="pathway name" value="IRAK2 mediated activation of TAK1 complex upon TLR7/8 or 9 stimulation"/>
</dbReference>
<dbReference type="SignaLink" id="Q8N5C8"/>
<dbReference type="SIGNOR" id="Q8N5C8"/>
<dbReference type="BioGRID-ORCS" id="257397">
    <property type="hits" value="10 hits in 780 CRISPR screens"/>
</dbReference>
<dbReference type="ChiTaRS" id="TAB3">
    <property type="organism name" value="human"/>
</dbReference>
<dbReference type="GeneWiki" id="MAP3K7IP3"/>
<dbReference type="GenomeRNAi" id="257397"/>
<dbReference type="Pharos" id="Q8N5C8">
    <property type="development level" value="Tbio"/>
</dbReference>
<dbReference type="PRO" id="PR:Q8N5C8"/>
<dbReference type="Proteomes" id="UP000005640">
    <property type="component" value="Chromosome X"/>
</dbReference>
<dbReference type="RNAct" id="Q8N5C8">
    <property type="molecule type" value="protein"/>
</dbReference>
<dbReference type="Bgee" id="ENSG00000157625">
    <property type="expression patterns" value="Expressed in epithelial cell of pancreas and 194 other cell types or tissues"/>
</dbReference>
<dbReference type="ExpressionAtlas" id="Q8N5C8">
    <property type="expression patterns" value="baseline and differential"/>
</dbReference>
<dbReference type="GO" id="GO:0005829">
    <property type="term" value="C:cytosol"/>
    <property type="evidence" value="ECO:0000304"/>
    <property type="project" value="Reactome"/>
</dbReference>
<dbReference type="GO" id="GO:0005783">
    <property type="term" value="C:endoplasmic reticulum"/>
    <property type="evidence" value="ECO:0000314"/>
    <property type="project" value="UniProt"/>
</dbReference>
<dbReference type="GO" id="GO:0010008">
    <property type="term" value="C:endosome membrane"/>
    <property type="evidence" value="ECO:0000304"/>
    <property type="project" value="Reactome"/>
</dbReference>
<dbReference type="GO" id="GO:0070062">
    <property type="term" value="C:extracellular exosome"/>
    <property type="evidence" value="ECO:0007005"/>
    <property type="project" value="UniProtKB"/>
</dbReference>
<dbReference type="GO" id="GO:0005886">
    <property type="term" value="C:plasma membrane"/>
    <property type="evidence" value="ECO:0000304"/>
    <property type="project" value="Reactome"/>
</dbReference>
<dbReference type="GO" id="GO:0070530">
    <property type="term" value="F:K63-linked polyubiquitin modification-dependent protein binding"/>
    <property type="evidence" value="ECO:0000314"/>
    <property type="project" value="UniProtKB"/>
</dbReference>
<dbReference type="GO" id="GO:0060090">
    <property type="term" value="F:molecular adaptor activity"/>
    <property type="evidence" value="ECO:0000314"/>
    <property type="project" value="UniProt"/>
</dbReference>
<dbReference type="GO" id="GO:0043130">
    <property type="term" value="F:ubiquitin binding"/>
    <property type="evidence" value="ECO:0007669"/>
    <property type="project" value="InterPro"/>
</dbReference>
<dbReference type="GO" id="GO:0008270">
    <property type="term" value="F:zinc ion binding"/>
    <property type="evidence" value="ECO:0000314"/>
    <property type="project" value="UniProtKB"/>
</dbReference>
<dbReference type="GO" id="GO:0042742">
    <property type="term" value="P:defense response to bacterium"/>
    <property type="evidence" value="ECO:0000314"/>
    <property type="project" value="UniProt"/>
</dbReference>
<dbReference type="GO" id="GO:0010507">
    <property type="term" value="P:negative regulation of autophagy"/>
    <property type="evidence" value="ECO:0000304"/>
    <property type="project" value="ParkinsonsUK-UCL"/>
</dbReference>
<dbReference type="GO" id="GO:0038061">
    <property type="term" value="P:non-canonical NF-kappaB signal transduction"/>
    <property type="evidence" value="ECO:0000314"/>
    <property type="project" value="UniProt"/>
</dbReference>
<dbReference type="GO" id="GO:0043123">
    <property type="term" value="P:positive regulation of canonical NF-kappaB signal transduction"/>
    <property type="evidence" value="ECO:0000314"/>
    <property type="project" value="UniProtKB"/>
</dbReference>
<dbReference type="CDD" id="cd14362">
    <property type="entry name" value="CUE_TAB2_TAB3"/>
    <property type="match status" value="1"/>
</dbReference>
<dbReference type="FunFam" id="1.10.8.10:FF:000025">
    <property type="entry name" value="TGF-beta-activated kinase 1 and MAP3K7-binding protein 3"/>
    <property type="match status" value="1"/>
</dbReference>
<dbReference type="Gene3D" id="1.10.8.10">
    <property type="entry name" value="DNA helicase RuvA subunit, C-terminal domain"/>
    <property type="match status" value="1"/>
</dbReference>
<dbReference type="Gene3D" id="2.30.30.380">
    <property type="entry name" value="Zn-finger domain of Sec23/24"/>
    <property type="match status" value="1"/>
</dbReference>
<dbReference type="InterPro" id="IPR003892">
    <property type="entry name" value="CUE"/>
</dbReference>
<dbReference type="InterPro" id="IPR041911">
    <property type="entry name" value="TAB2/3_CUE"/>
</dbReference>
<dbReference type="InterPro" id="IPR001876">
    <property type="entry name" value="Znf_RanBP2"/>
</dbReference>
<dbReference type="InterPro" id="IPR036443">
    <property type="entry name" value="Znf_RanBP2_sf"/>
</dbReference>
<dbReference type="PANTHER" id="PTHR46253:SF3">
    <property type="entry name" value="TGF-BETA-ACTIVATED KINASE 1 AND MAP3K7-BINDING PROTEIN 3"/>
    <property type="match status" value="1"/>
</dbReference>
<dbReference type="PANTHER" id="PTHR46253">
    <property type="entry name" value="TGF-BETA-ACTIVATED KINASE 1 AND MAP3K7-BINDING PROTEIN TAB"/>
    <property type="match status" value="1"/>
</dbReference>
<dbReference type="Pfam" id="PF02845">
    <property type="entry name" value="CUE"/>
    <property type="match status" value="1"/>
</dbReference>
<dbReference type="SMART" id="SM00546">
    <property type="entry name" value="CUE"/>
    <property type="match status" value="1"/>
</dbReference>
<dbReference type="SMART" id="SM00547">
    <property type="entry name" value="ZnF_RBZ"/>
    <property type="match status" value="1"/>
</dbReference>
<dbReference type="SUPFAM" id="SSF90209">
    <property type="entry name" value="Ran binding protein zinc finger-like"/>
    <property type="match status" value="1"/>
</dbReference>
<dbReference type="PROSITE" id="PS51140">
    <property type="entry name" value="CUE"/>
    <property type="match status" value="1"/>
</dbReference>
<dbReference type="PROSITE" id="PS01358">
    <property type="entry name" value="ZF_RANBP2_1"/>
    <property type="match status" value="1"/>
</dbReference>
<dbReference type="PROSITE" id="PS50199">
    <property type="entry name" value="ZF_RANBP2_2"/>
    <property type="match status" value="1"/>
</dbReference>
<gene>
    <name evidence="20 22" type="primary">TAB3</name>
    <name type="synonym">MAP3K7IP3</name>
</gene>
<organism>
    <name type="scientific">Homo sapiens</name>
    <name type="common">Human</name>
    <dbReference type="NCBI Taxonomy" id="9606"/>
    <lineage>
        <taxon>Eukaryota</taxon>
        <taxon>Metazoa</taxon>
        <taxon>Chordata</taxon>
        <taxon>Craniata</taxon>
        <taxon>Vertebrata</taxon>
        <taxon>Euteleostomi</taxon>
        <taxon>Mammalia</taxon>
        <taxon>Eutheria</taxon>
        <taxon>Euarchontoglires</taxon>
        <taxon>Primates</taxon>
        <taxon>Haplorrhini</taxon>
        <taxon>Catarrhini</taxon>
        <taxon>Hominidae</taxon>
        <taxon>Homo</taxon>
    </lineage>
</organism>